<proteinExistence type="inferred from homology"/>
<organism>
    <name type="scientific">Escherichia coli O139:H28 (strain E24377A / ETEC)</name>
    <dbReference type="NCBI Taxonomy" id="331111"/>
    <lineage>
        <taxon>Bacteria</taxon>
        <taxon>Pseudomonadati</taxon>
        <taxon>Pseudomonadota</taxon>
        <taxon>Gammaproteobacteria</taxon>
        <taxon>Enterobacterales</taxon>
        <taxon>Enterobacteriaceae</taxon>
        <taxon>Escherichia</taxon>
    </lineage>
</organism>
<protein>
    <recommendedName>
        <fullName evidence="1">Divalent-cation tolerance protein CutA</fullName>
    </recommendedName>
</protein>
<sequence>MLDEKSSNTASVVVLCTAPDEATAQDLAAKVLAEKLAACATLIPGATSLYYWEGKLEQEYEVQMILKTTVSHQQALLECLKSHHPYQTPELLVLPVTHGDTDYLSWLNASLR</sequence>
<dbReference type="EMBL" id="CP000800">
    <property type="protein sequence ID" value="ABV19539.1"/>
    <property type="molecule type" value="Genomic_DNA"/>
</dbReference>
<dbReference type="RefSeq" id="WP_000883400.1">
    <property type="nucleotide sequence ID" value="NC_009801.1"/>
</dbReference>
<dbReference type="BMRB" id="A7ZV06"/>
<dbReference type="SMR" id="A7ZV06"/>
<dbReference type="GeneID" id="93777687"/>
<dbReference type="KEGG" id="ecw:EcE24377A_4692"/>
<dbReference type="HOGENOM" id="CLU_098807_3_0_6"/>
<dbReference type="Proteomes" id="UP000001122">
    <property type="component" value="Chromosome"/>
</dbReference>
<dbReference type="GO" id="GO:0005737">
    <property type="term" value="C:cytoplasm"/>
    <property type="evidence" value="ECO:0007669"/>
    <property type="project" value="UniProtKB-SubCell"/>
</dbReference>
<dbReference type="GO" id="GO:0005507">
    <property type="term" value="F:copper ion binding"/>
    <property type="evidence" value="ECO:0007669"/>
    <property type="project" value="UniProtKB-UniRule"/>
</dbReference>
<dbReference type="GO" id="GO:0010038">
    <property type="term" value="P:response to metal ion"/>
    <property type="evidence" value="ECO:0007669"/>
    <property type="project" value="InterPro"/>
</dbReference>
<dbReference type="FunFam" id="3.30.70.120:FF:000004">
    <property type="entry name" value="Divalent-cation tolerance protein CutA"/>
    <property type="match status" value="1"/>
</dbReference>
<dbReference type="Gene3D" id="3.30.70.120">
    <property type="match status" value="1"/>
</dbReference>
<dbReference type="HAMAP" id="MF_01160">
    <property type="entry name" value="CutA"/>
    <property type="match status" value="1"/>
</dbReference>
<dbReference type="InterPro" id="IPR023700">
    <property type="entry name" value="CutA_Enterobact"/>
</dbReference>
<dbReference type="InterPro" id="IPR004323">
    <property type="entry name" value="Ion_tolerance_CutA"/>
</dbReference>
<dbReference type="InterPro" id="IPR011322">
    <property type="entry name" value="N-reg_PII-like_a/b"/>
</dbReference>
<dbReference type="InterPro" id="IPR015867">
    <property type="entry name" value="N-reg_PII/ATP_PRibTrfase_C"/>
</dbReference>
<dbReference type="NCBIfam" id="NF007930">
    <property type="entry name" value="PRK10645.1"/>
    <property type="match status" value="1"/>
</dbReference>
<dbReference type="PANTHER" id="PTHR23419">
    <property type="entry name" value="DIVALENT CATION TOLERANCE CUTA-RELATED"/>
    <property type="match status" value="1"/>
</dbReference>
<dbReference type="PANTHER" id="PTHR23419:SF8">
    <property type="entry name" value="FI09726P"/>
    <property type="match status" value="1"/>
</dbReference>
<dbReference type="Pfam" id="PF03091">
    <property type="entry name" value="CutA1"/>
    <property type="match status" value="1"/>
</dbReference>
<dbReference type="SUPFAM" id="SSF54913">
    <property type="entry name" value="GlnB-like"/>
    <property type="match status" value="1"/>
</dbReference>
<comment type="function">
    <text evidence="1">Involved in resistance toward heavy metals.</text>
</comment>
<comment type="cofactor">
    <cofactor evidence="1">
        <name>Cu cation</name>
        <dbReference type="ChEBI" id="CHEBI:23378"/>
    </cofactor>
    <text evidence="1">Binds 1 copper ion per subunit.</text>
</comment>
<comment type="subunit">
    <text evidence="1">Homotrimer.</text>
</comment>
<comment type="subcellular location">
    <subcellularLocation>
        <location evidence="1">Cytoplasm</location>
    </subcellularLocation>
</comment>
<comment type="similarity">
    <text evidence="1">Belongs to the CutA family.</text>
</comment>
<keyword id="KW-0186">Copper</keyword>
<keyword id="KW-0963">Cytoplasm</keyword>
<keyword id="KW-0479">Metal-binding</keyword>
<keyword id="KW-1185">Reference proteome</keyword>
<reference key="1">
    <citation type="journal article" date="2008" name="J. Bacteriol.">
        <title>The pangenome structure of Escherichia coli: comparative genomic analysis of E. coli commensal and pathogenic isolates.</title>
        <authorList>
            <person name="Rasko D.A."/>
            <person name="Rosovitz M.J."/>
            <person name="Myers G.S.A."/>
            <person name="Mongodin E.F."/>
            <person name="Fricke W.F."/>
            <person name="Gajer P."/>
            <person name="Crabtree J."/>
            <person name="Sebaihia M."/>
            <person name="Thomson N.R."/>
            <person name="Chaudhuri R."/>
            <person name="Henderson I.R."/>
            <person name="Sperandio V."/>
            <person name="Ravel J."/>
        </authorList>
    </citation>
    <scope>NUCLEOTIDE SEQUENCE [LARGE SCALE GENOMIC DNA]</scope>
    <source>
        <strain>E24377A / ETEC</strain>
    </source>
</reference>
<name>CUTA_ECO24</name>
<evidence type="ECO:0000255" key="1">
    <source>
        <dbReference type="HAMAP-Rule" id="MF_01160"/>
    </source>
</evidence>
<gene>
    <name evidence="1" type="primary">cutA</name>
    <name type="ordered locus">EcE24377A_4692</name>
</gene>
<accession>A7ZV06</accession>
<feature type="chain" id="PRO_1000065597" description="Divalent-cation tolerance protein CutA">
    <location>
        <begin position="1"/>
        <end position="112"/>
    </location>
</feature>
<feature type="binding site" evidence="1">
    <location>
        <position position="16"/>
    </location>
    <ligand>
        <name>Cu cation</name>
        <dbReference type="ChEBI" id="CHEBI:23378"/>
    </ligand>
</feature>
<feature type="binding site" evidence="1">
    <location>
        <position position="83"/>
    </location>
    <ligand>
        <name>Cu cation</name>
        <dbReference type="ChEBI" id="CHEBI:23378"/>
    </ligand>
</feature>
<feature type="binding site" evidence="1">
    <location>
        <position position="84"/>
    </location>
    <ligand>
        <name>Cu cation</name>
        <dbReference type="ChEBI" id="CHEBI:23378"/>
    </ligand>
</feature>